<dbReference type="EC" id="2.1.1.61" evidence="1"/>
<dbReference type="EC" id="1.5.-.-" evidence="1"/>
<dbReference type="EMBL" id="CP000927">
    <property type="protein sequence ID" value="ABZ69997.1"/>
    <property type="molecule type" value="Genomic_DNA"/>
</dbReference>
<dbReference type="SMR" id="B0SVF8"/>
<dbReference type="STRING" id="366602.Caul_0866"/>
<dbReference type="KEGG" id="cak:Caul_0866"/>
<dbReference type="eggNOG" id="COG0665">
    <property type="taxonomic scope" value="Bacteria"/>
</dbReference>
<dbReference type="eggNOG" id="COG4121">
    <property type="taxonomic scope" value="Bacteria"/>
</dbReference>
<dbReference type="HOGENOM" id="CLU_022427_1_0_5"/>
<dbReference type="OrthoDB" id="9786494at2"/>
<dbReference type="GO" id="GO:0005737">
    <property type="term" value="C:cytoplasm"/>
    <property type="evidence" value="ECO:0007669"/>
    <property type="project" value="UniProtKB-SubCell"/>
</dbReference>
<dbReference type="GO" id="GO:0050660">
    <property type="term" value="F:flavin adenine dinucleotide binding"/>
    <property type="evidence" value="ECO:0007669"/>
    <property type="project" value="UniProtKB-UniRule"/>
</dbReference>
<dbReference type="GO" id="GO:0016645">
    <property type="term" value="F:oxidoreductase activity, acting on the CH-NH group of donors"/>
    <property type="evidence" value="ECO:0007669"/>
    <property type="project" value="InterPro"/>
</dbReference>
<dbReference type="GO" id="GO:0004808">
    <property type="term" value="F:tRNA (5-methylaminomethyl-2-thiouridylate)(34)-methyltransferase activity"/>
    <property type="evidence" value="ECO:0007669"/>
    <property type="project" value="UniProtKB-EC"/>
</dbReference>
<dbReference type="GO" id="GO:0032259">
    <property type="term" value="P:methylation"/>
    <property type="evidence" value="ECO:0007669"/>
    <property type="project" value="UniProtKB-KW"/>
</dbReference>
<dbReference type="GO" id="GO:0002097">
    <property type="term" value="P:tRNA wobble base modification"/>
    <property type="evidence" value="ECO:0007669"/>
    <property type="project" value="UniProtKB-UniRule"/>
</dbReference>
<dbReference type="Gene3D" id="3.30.9.10">
    <property type="entry name" value="D-Amino Acid Oxidase, subunit A, domain 2"/>
    <property type="match status" value="1"/>
</dbReference>
<dbReference type="Gene3D" id="3.50.50.60">
    <property type="entry name" value="FAD/NAD(P)-binding domain"/>
    <property type="match status" value="1"/>
</dbReference>
<dbReference type="Gene3D" id="3.40.50.150">
    <property type="entry name" value="Vaccinia Virus protein VP39"/>
    <property type="match status" value="1"/>
</dbReference>
<dbReference type="HAMAP" id="MF_01102">
    <property type="entry name" value="MnmC"/>
    <property type="match status" value="1"/>
</dbReference>
<dbReference type="InterPro" id="IPR006076">
    <property type="entry name" value="FAD-dep_OxRdtase"/>
</dbReference>
<dbReference type="InterPro" id="IPR036188">
    <property type="entry name" value="FAD/NAD-bd_sf"/>
</dbReference>
<dbReference type="InterPro" id="IPR008471">
    <property type="entry name" value="MnmC-like_methylTransf"/>
</dbReference>
<dbReference type="InterPro" id="IPR029063">
    <property type="entry name" value="SAM-dependent_MTases_sf"/>
</dbReference>
<dbReference type="InterPro" id="IPR023032">
    <property type="entry name" value="tRNA_MAMT_biosynth_bifunc_MnmC"/>
</dbReference>
<dbReference type="InterPro" id="IPR047785">
    <property type="entry name" value="tRNA_MNMC2"/>
</dbReference>
<dbReference type="InterPro" id="IPR017610">
    <property type="entry name" value="tRNA_S-uridine_synth_MnmC_C"/>
</dbReference>
<dbReference type="NCBIfam" id="TIGR03197">
    <property type="entry name" value="MnmC_Cterm"/>
    <property type="match status" value="1"/>
</dbReference>
<dbReference type="NCBIfam" id="NF033855">
    <property type="entry name" value="tRNA_MNMC2"/>
    <property type="match status" value="1"/>
</dbReference>
<dbReference type="PANTHER" id="PTHR13847">
    <property type="entry name" value="SARCOSINE DEHYDROGENASE-RELATED"/>
    <property type="match status" value="1"/>
</dbReference>
<dbReference type="PANTHER" id="PTHR13847:SF283">
    <property type="entry name" value="TRNA 5-METHYLAMINOMETHYL-2-THIOURIDINE BIOSYNTHESIS BIFUNCTIONAL PROTEIN MNMC"/>
    <property type="match status" value="1"/>
</dbReference>
<dbReference type="Pfam" id="PF01266">
    <property type="entry name" value="DAO"/>
    <property type="match status" value="1"/>
</dbReference>
<dbReference type="Pfam" id="PF05430">
    <property type="entry name" value="Methyltransf_30"/>
    <property type="match status" value="1"/>
</dbReference>
<dbReference type="SUPFAM" id="SSF54373">
    <property type="entry name" value="FAD-linked reductases, C-terminal domain"/>
    <property type="match status" value="1"/>
</dbReference>
<dbReference type="SUPFAM" id="SSF51971">
    <property type="entry name" value="Nucleotide-binding domain"/>
    <property type="match status" value="1"/>
</dbReference>
<dbReference type="SUPFAM" id="SSF53335">
    <property type="entry name" value="S-adenosyl-L-methionine-dependent methyltransferases"/>
    <property type="match status" value="1"/>
</dbReference>
<proteinExistence type="inferred from homology"/>
<protein>
    <recommendedName>
        <fullName evidence="1">tRNA 5-methylaminomethyl-2-thiouridine biosynthesis bifunctional protein MnmC</fullName>
        <shortName evidence="1">tRNA mnm(5)s(2)U biosynthesis bifunctional protein</shortName>
    </recommendedName>
    <domain>
        <recommendedName>
            <fullName evidence="1">tRNA (mnm(5)s(2)U34)-methyltransferase</fullName>
            <ecNumber evidence="1">2.1.1.61</ecNumber>
        </recommendedName>
    </domain>
    <domain>
        <recommendedName>
            <fullName evidence="1">FAD-dependent cmnm(5)s(2)U34 oxidoreductase</fullName>
            <ecNumber evidence="1">1.5.-.-</ecNumber>
        </recommendedName>
    </domain>
</protein>
<reference key="1">
    <citation type="submission" date="2008-01" db="EMBL/GenBank/DDBJ databases">
        <title>Complete sequence of chromosome of Caulobacter sp. K31.</title>
        <authorList>
            <consortium name="US DOE Joint Genome Institute"/>
            <person name="Copeland A."/>
            <person name="Lucas S."/>
            <person name="Lapidus A."/>
            <person name="Barry K."/>
            <person name="Glavina del Rio T."/>
            <person name="Dalin E."/>
            <person name="Tice H."/>
            <person name="Pitluck S."/>
            <person name="Bruce D."/>
            <person name="Goodwin L."/>
            <person name="Thompson L.S."/>
            <person name="Brettin T."/>
            <person name="Detter J.C."/>
            <person name="Han C."/>
            <person name="Schmutz J."/>
            <person name="Larimer F."/>
            <person name="Land M."/>
            <person name="Hauser L."/>
            <person name="Kyrpides N."/>
            <person name="Kim E."/>
            <person name="Stephens C."/>
            <person name="Richardson P."/>
        </authorList>
    </citation>
    <scope>NUCLEOTIDE SEQUENCE [LARGE SCALE GENOMIC DNA]</scope>
    <source>
        <strain>K31</strain>
    </source>
</reference>
<gene>
    <name evidence="1" type="primary">mnmC</name>
    <name type="ordered locus">Caul_0866</name>
</gene>
<comment type="function">
    <text evidence="1">Catalyzes the last two steps in the biosynthesis of 5-methylaminomethyl-2-thiouridine (mnm(5)s(2)U) at the wobble position (U34) in tRNA. Catalyzes the FAD-dependent demodification of cmnm(5)s(2)U34 to nm(5)s(2)U34, followed by the transfer of a methyl group from S-adenosyl-L-methionine to nm(5)s(2)U34, to form mnm(5)s(2)U34.</text>
</comment>
<comment type="catalytic activity">
    <reaction evidence="1">
        <text>5-aminomethyl-2-thiouridine(34) in tRNA + S-adenosyl-L-methionine = 5-methylaminomethyl-2-thiouridine(34) in tRNA + S-adenosyl-L-homocysteine + H(+)</text>
        <dbReference type="Rhea" id="RHEA:19569"/>
        <dbReference type="Rhea" id="RHEA-COMP:10195"/>
        <dbReference type="Rhea" id="RHEA-COMP:10197"/>
        <dbReference type="ChEBI" id="CHEBI:15378"/>
        <dbReference type="ChEBI" id="CHEBI:57856"/>
        <dbReference type="ChEBI" id="CHEBI:59789"/>
        <dbReference type="ChEBI" id="CHEBI:74454"/>
        <dbReference type="ChEBI" id="CHEBI:74455"/>
        <dbReference type="EC" id="2.1.1.61"/>
    </reaction>
</comment>
<comment type="cofactor">
    <cofactor evidence="1">
        <name>FAD</name>
        <dbReference type="ChEBI" id="CHEBI:57692"/>
    </cofactor>
</comment>
<comment type="subcellular location">
    <subcellularLocation>
        <location evidence="1">Cytoplasm</location>
    </subcellularLocation>
</comment>
<comment type="similarity">
    <text evidence="1">In the N-terminal section; belongs to the methyltransferase superfamily. tRNA (mnm(5)s(2)U34)-methyltransferase family.</text>
</comment>
<comment type="similarity">
    <text evidence="1">In the C-terminal section; belongs to the DAO family.</text>
</comment>
<name>MNMC_CAUSK</name>
<organism>
    <name type="scientific">Caulobacter sp. (strain K31)</name>
    <dbReference type="NCBI Taxonomy" id="366602"/>
    <lineage>
        <taxon>Bacteria</taxon>
        <taxon>Pseudomonadati</taxon>
        <taxon>Pseudomonadota</taxon>
        <taxon>Alphaproteobacteria</taxon>
        <taxon>Caulobacterales</taxon>
        <taxon>Caulobacteraceae</taxon>
        <taxon>Caulobacter</taxon>
    </lineage>
</organism>
<evidence type="ECO:0000255" key="1">
    <source>
        <dbReference type="HAMAP-Rule" id="MF_01102"/>
    </source>
</evidence>
<feature type="chain" id="PRO_0000347974" description="tRNA 5-methylaminomethyl-2-thiouridine biosynthesis bifunctional protein MnmC">
    <location>
        <begin position="1"/>
        <end position="601"/>
    </location>
</feature>
<feature type="region of interest" description="tRNA (mnm(5)s(2)U34)-methyltransferase">
    <location>
        <begin position="1"/>
        <end position="237"/>
    </location>
</feature>
<feature type="region of interest" description="FAD-dependent cmnm(5)s(2)U34 oxidoreductase">
    <location>
        <begin position="252"/>
        <end position="601"/>
    </location>
</feature>
<accession>B0SVF8</accession>
<sequence>MSDPTASPLIWRDDGMPQSALYGDVYFSSADGLAETRAVFLAGCDLPAAWAGRDHFTVGELGFGTGLNIAALLDLWRREKAPHSMQGGQRLHIFSIEAHPITRDEAARALAVWPELGEAASVLLDHWPGLARGFHRIDLPGFDATFDLAVMDVEPALAAWDGAADAWFLDGFSPALNPAMWREEILAAVAARSAPGARAATFTVAGAVRRGLSAAGFQVDRRPGFGRKKQRLEAVAPGVAASPPRPRRLAVIGGGIAGAAMARAARAEGLEAMMFDDGQAPASGNPAALVTPALDAGGGPRAALPAQAFARAAALYEALPEAVIARGALKLSVVPRDEARHAAVADQDLFEPGTMAVLDAATATARLGEPVGEALSMSQALVVEPARVLDAWRGEVIDAQVARLAHEDGVWRLLGSDDQLLAEVDAVVLAGGAGQARLWPDAPLRPIRGQTSWTDRPLAFPTPAAFGGYVAPTRDGMLFGATHDRDDVGTDARAEDDRRNLRALAEGLPKLAASLADAPLRGRAAVRATTADHLPVAGAVPGAAPGLFVLGGLGGRGFCLAPLLAEHLAARILALPSPLPRPLSALVEPGRFSSRVATGAV</sequence>
<keyword id="KW-0963">Cytoplasm</keyword>
<keyword id="KW-0274">FAD</keyword>
<keyword id="KW-0285">Flavoprotein</keyword>
<keyword id="KW-0489">Methyltransferase</keyword>
<keyword id="KW-0511">Multifunctional enzyme</keyword>
<keyword id="KW-0560">Oxidoreductase</keyword>
<keyword id="KW-0949">S-adenosyl-L-methionine</keyword>
<keyword id="KW-0808">Transferase</keyword>
<keyword id="KW-0819">tRNA processing</keyword>